<accession>P93306</accession>
<accession>A0A2P2CLH2</accession>
<protein>
    <recommendedName>
        <fullName>NADH dehydrogenase [ubiquinone] iron-sulfur protein 2</fullName>
        <ecNumber>7.1.1.2</ecNumber>
    </recommendedName>
    <alternativeName>
        <fullName>NADH dehydrogenase subunit 7</fullName>
    </alternativeName>
</protein>
<comment type="function">
    <text evidence="1">Core subunit of the mitochondrial membrane respiratory chain NADH dehydrogenase (Complex I) that is believed to belong to the minimal assembly required for catalysis. Complex I functions in the transfer of electrons from NADH to the respiratory chain. The immediate electron acceptor for the enzyme is believed to be ubiquinone (By similarity). Component of the iron-sulfur (IP) fragment of the enzyme.</text>
</comment>
<comment type="catalytic activity">
    <reaction>
        <text>a ubiquinone + NADH + 5 H(+)(in) = a ubiquinol + NAD(+) + 4 H(+)(out)</text>
        <dbReference type="Rhea" id="RHEA:29091"/>
        <dbReference type="Rhea" id="RHEA-COMP:9565"/>
        <dbReference type="Rhea" id="RHEA-COMP:9566"/>
        <dbReference type="ChEBI" id="CHEBI:15378"/>
        <dbReference type="ChEBI" id="CHEBI:16389"/>
        <dbReference type="ChEBI" id="CHEBI:17976"/>
        <dbReference type="ChEBI" id="CHEBI:57540"/>
        <dbReference type="ChEBI" id="CHEBI:57945"/>
        <dbReference type="EC" id="7.1.1.2"/>
    </reaction>
</comment>
<comment type="subunit">
    <text>Complex I is composed of at least 49 different subunits. This is a component of the iron-sulfur (IP) fragment of the enzyme.</text>
</comment>
<comment type="subcellular location">
    <subcellularLocation>
        <location evidence="3">Mitochondrion</location>
    </subcellularLocation>
</comment>
<comment type="RNA editing">
    <location>
        <position position="13" evidence="2 4"/>
    </location>
    <location>
        <position position="26" evidence="2 4"/>
    </location>
    <location>
        <position position="46" evidence="2 4"/>
    </location>
    <location>
        <position position="67" evidence="2 4"/>
    </location>
    <location>
        <position position="70" evidence="4"/>
    </location>
    <location>
        <position position="82" evidence="2 4"/>
    </location>
    <location>
        <position position="84" evidence="2 4"/>
    </location>
    <location>
        <position position="106" evidence="2 4"/>
    </location>
    <location>
        <position position="112" evidence="2 4"/>
    </location>
    <location>
        <position position="115" evidence="2 4"/>
    </location>
    <location>
        <position position="193" evidence="2 4"/>
    </location>
    <location>
        <position position="227" evidence="4"/>
    </location>
    <location>
        <position position="233" evidence="2 4"/>
    </location>
    <location>
        <position position="242" evidence="2 4"/>
    </location>
    <location>
        <position position="245" evidence="2 4"/>
    </location>
    <location>
        <position position="247" evidence="2 4"/>
    </location>
    <location>
        <position position="257" evidence="2 4"/>
    </location>
    <location>
        <position position="309" evidence="4"/>
    </location>
    <location>
        <position position="353" evidence="2 4"/>
    </location>
    <location>
        <position position="360" evidence="2 4"/>
    </location>
    <location>
        <position position="363" evidence="2 4"/>
    </location>
    <location>
        <position position="368" evidence="2 4"/>
    </location>
    <location>
        <position position="375" evidence="2 4"/>
    </location>
</comment>
<comment type="miscellaneous">
    <text>A stretch of 270 kb of the mitochondrial genome is duplicated within the centromere of chromosome 2 resulting in the duplication of the gene. The expression of the duplicated gene (At2g07709) is not demonstrated. It is also probably not RNA edited and therefore differs in all the positions known to be edited.</text>
</comment>
<comment type="similarity">
    <text evidence="5">Belongs to the complex I 49 kDa subunit family.</text>
</comment>
<dbReference type="EC" id="7.1.1.2"/>
<dbReference type="EMBL" id="Y08501">
    <property type="protein sequence ID" value="CAA69735.3"/>
    <property type="status" value="ALT_SEQ"/>
    <property type="molecule type" value="Genomic_DNA"/>
</dbReference>
<dbReference type="EMBL" id="BK010421">
    <property type="protein sequence ID" value="DAB41513.2"/>
    <property type="molecule type" value="Genomic_DNA"/>
</dbReference>
<dbReference type="EMBL" id="AC007729">
    <property type="status" value="NOT_ANNOTATED_CDS"/>
    <property type="molecule type" value="Genomic_DNA"/>
</dbReference>
<dbReference type="RefSeq" id="NP_085511.1">
    <property type="nucleotide sequence ID" value="NC_001284.2"/>
</dbReference>
<dbReference type="PDB" id="7A23">
    <property type="method" value="EM"/>
    <property type="resolution" value="3.70 A"/>
    <property type="chains" value="G=1-394"/>
</dbReference>
<dbReference type="PDB" id="7A24">
    <property type="method" value="EM"/>
    <property type="resolution" value="3.80 A"/>
    <property type="chains" value="G=1-394"/>
</dbReference>
<dbReference type="PDB" id="7AQR">
    <property type="method" value="EM"/>
    <property type="resolution" value="2.91 A"/>
    <property type="chains" value="D=1-394"/>
</dbReference>
<dbReference type="PDB" id="7AR7">
    <property type="method" value="EM"/>
    <property type="resolution" value="3.72 A"/>
    <property type="chains" value="D=10-394"/>
</dbReference>
<dbReference type="PDB" id="7AR8">
    <property type="method" value="EM"/>
    <property type="resolution" value="3.53 A"/>
    <property type="chains" value="D=1-394"/>
</dbReference>
<dbReference type="PDB" id="7ARB">
    <property type="method" value="EM"/>
    <property type="resolution" value="3.41 A"/>
    <property type="chains" value="D=1-394"/>
</dbReference>
<dbReference type="PDB" id="8BEE">
    <property type="method" value="EM"/>
    <property type="resolution" value="2.04 A"/>
    <property type="chains" value="D=1-394"/>
</dbReference>
<dbReference type="PDB" id="8BPX">
    <property type="method" value="EM"/>
    <property type="resolution" value="2.09 A"/>
    <property type="chains" value="D=1-394"/>
</dbReference>
<dbReference type="PDB" id="8BQ5">
    <property type="method" value="EM"/>
    <property type="resolution" value="2.73 A"/>
    <property type="chains" value="D=1-394"/>
</dbReference>
<dbReference type="PDB" id="8BQ6">
    <property type="method" value="EM"/>
    <property type="resolution" value="2.80 A"/>
    <property type="chains" value="D=1-394"/>
</dbReference>
<dbReference type="PDBsum" id="7A23"/>
<dbReference type="PDBsum" id="7A24"/>
<dbReference type="PDBsum" id="7AQR"/>
<dbReference type="PDBsum" id="7AR7"/>
<dbReference type="PDBsum" id="7AR8"/>
<dbReference type="PDBsum" id="7ARB"/>
<dbReference type="PDBsum" id="8BEE"/>
<dbReference type="PDBsum" id="8BPX"/>
<dbReference type="PDBsum" id="8BQ5"/>
<dbReference type="PDBsum" id="8BQ6"/>
<dbReference type="EMDB" id="EMD-11873"/>
<dbReference type="EMDB" id="EMD-11878"/>
<dbReference type="EMDB" id="EMD-15999"/>
<dbReference type="EMDB" id="EMD-16168"/>
<dbReference type="EMDB" id="EMD-16171"/>
<dbReference type="EMDB" id="EMD-16172"/>
<dbReference type="SMR" id="P93306"/>
<dbReference type="FunCoup" id="P93306">
    <property type="interactions" value="2087"/>
</dbReference>
<dbReference type="IntAct" id="P93306">
    <property type="interactions" value="4"/>
</dbReference>
<dbReference type="STRING" id="3702.A0A2P2CLH2"/>
<dbReference type="TCDB" id="3.D.1.6.3">
    <property type="family name" value="the h+ or na+-translocating nadh dehydrogenase (ndh) family"/>
</dbReference>
<dbReference type="SwissPalm" id="P93306"/>
<dbReference type="PaxDb" id="3702-ATMG00510.1"/>
<dbReference type="PeptideAtlas" id="P93306"/>
<dbReference type="Araport" id="ATMG00510"/>
<dbReference type="TAIR" id="ATMG00510">
    <property type="gene designation" value="NAD7"/>
</dbReference>
<dbReference type="eggNOG" id="KOG2870">
    <property type="taxonomic scope" value="Eukaryota"/>
</dbReference>
<dbReference type="InParanoid" id="P93306"/>
<dbReference type="BioCyc" id="ARA:ATMG00510-MONOMER"/>
<dbReference type="BioCyc" id="MetaCyc:ATMG00510-MONOMER"/>
<dbReference type="PRO" id="PR:P93306"/>
<dbReference type="Proteomes" id="UP000006548">
    <property type="component" value="Mitochondrion MT"/>
</dbReference>
<dbReference type="ExpressionAtlas" id="P93306">
    <property type="expression patterns" value="baseline and differential"/>
</dbReference>
<dbReference type="GO" id="GO:0005739">
    <property type="term" value="C:mitochondrion"/>
    <property type="evidence" value="ECO:0007669"/>
    <property type="project" value="UniProtKB-SubCell"/>
</dbReference>
<dbReference type="GO" id="GO:0045271">
    <property type="term" value="C:respiratory chain complex I"/>
    <property type="evidence" value="ECO:0000318"/>
    <property type="project" value="GO_Central"/>
</dbReference>
<dbReference type="GO" id="GO:0051287">
    <property type="term" value="F:NAD binding"/>
    <property type="evidence" value="ECO:0007669"/>
    <property type="project" value="InterPro"/>
</dbReference>
<dbReference type="GO" id="GO:0008137">
    <property type="term" value="F:NADH dehydrogenase (ubiquinone) activity"/>
    <property type="evidence" value="ECO:0007669"/>
    <property type="project" value="UniProtKB-EC"/>
</dbReference>
<dbReference type="GO" id="GO:0048038">
    <property type="term" value="F:quinone binding"/>
    <property type="evidence" value="ECO:0007669"/>
    <property type="project" value="InterPro"/>
</dbReference>
<dbReference type="GO" id="GO:0006120">
    <property type="term" value="P:mitochondrial electron transport, NADH to ubiquinone"/>
    <property type="evidence" value="ECO:0000318"/>
    <property type="project" value="GO_Central"/>
</dbReference>
<dbReference type="FunFam" id="1.10.645.10:FF:000005">
    <property type="entry name" value="NADH-quinone oxidoreductase subunit D"/>
    <property type="match status" value="1"/>
</dbReference>
<dbReference type="Gene3D" id="1.10.645.10">
    <property type="entry name" value="Cytochrome-c3 Hydrogenase, chain B"/>
    <property type="match status" value="1"/>
</dbReference>
<dbReference type="HAMAP" id="MF_01358">
    <property type="entry name" value="NDH1_NuoD"/>
    <property type="match status" value="1"/>
</dbReference>
<dbReference type="InterPro" id="IPR001135">
    <property type="entry name" value="NADH_Q_OxRdtase_suD"/>
</dbReference>
<dbReference type="InterPro" id="IPR014029">
    <property type="entry name" value="NADH_UbQ_OxRdtase_49kDa_CS"/>
</dbReference>
<dbReference type="InterPro" id="IPR022885">
    <property type="entry name" value="NDH1_su_D/H"/>
</dbReference>
<dbReference type="InterPro" id="IPR029014">
    <property type="entry name" value="NiFe-Hase_large"/>
</dbReference>
<dbReference type="NCBIfam" id="TIGR01962">
    <property type="entry name" value="NuoD"/>
    <property type="match status" value="1"/>
</dbReference>
<dbReference type="NCBIfam" id="NF004739">
    <property type="entry name" value="PRK06075.1"/>
    <property type="match status" value="1"/>
</dbReference>
<dbReference type="PANTHER" id="PTHR11993:SF10">
    <property type="entry name" value="NADH DEHYDROGENASE [UBIQUINONE] IRON-SULFUR PROTEIN 2, MITOCHONDRIAL"/>
    <property type="match status" value="1"/>
</dbReference>
<dbReference type="PANTHER" id="PTHR11993">
    <property type="entry name" value="NADH-UBIQUINONE OXIDOREDUCTASE 49 KDA SUBUNIT"/>
    <property type="match status" value="1"/>
</dbReference>
<dbReference type="Pfam" id="PF00346">
    <property type="entry name" value="Complex1_49kDa"/>
    <property type="match status" value="1"/>
</dbReference>
<dbReference type="SUPFAM" id="SSF56762">
    <property type="entry name" value="HydB/Nqo4-like"/>
    <property type="match status" value="1"/>
</dbReference>
<dbReference type="PROSITE" id="PS00535">
    <property type="entry name" value="COMPLEX1_49K"/>
    <property type="match status" value="1"/>
</dbReference>
<keyword id="KW-0002">3D-structure</keyword>
<keyword id="KW-0249">Electron transport</keyword>
<keyword id="KW-0496">Mitochondrion</keyword>
<keyword id="KW-0520">NAD</keyword>
<keyword id="KW-0560">Oxidoreductase</keyword>
<keyword id="KW-1185">Reference proteome</keyword>
<keyword id="KW-0679">Respiratory chain</keyword>
<keyword id="KW-0691">RNA editing</keyword>
<keyword id="KW-1278">Translocase</keyword>
<keyword id="KW-0813">Transport</keyword>
<keyword id="KW-0830">Ubiquinone</keyword>
<name>NDUS2_ARATH</name>
<proteinExistence type="evidence at protein level"/>
<organism>
    <name type="scientific">Arabidopsis thaliana</name>
    <name type="common">Mouse-ear cress</name>
    <dbReference type="NCBI Taxonomy" id="3702"/>
    <lineage>
        <taxon>Eukaryota</taxon>
        <taxon>Viridiplantae</taxon>
        <taxon>Streptophyta</taxon>
        <taxon>Embryophyta</taxon>
        <taxon>Tracheophyta</taxon>
        <taxon>Spermatophyta</taxon>
        <taxon>Magnoliopsida</taxon>
        <taxon>eudicotyledons</taxon>
        <taxon>Gunneridae</taxon>
        <taxon>Pentapetalae</taxon>
        <taxon>rosids</taxon>
        <taxon>malvids</taxon>
        <taxon>Brassicales</taxon>
        <taxon>Brassicaceae</taxon>
        <taxon>Camelineae</taxon>
        <taxon>Arabidopsis</taxon>
    </lineage>
</organism>
<feature type="chain" id="PRO_0000118583" description="NADH dehydrogenase [ubiquinone] iron-sulfur protein 2">
    <location>
        <begin position="1"/>
        <end position="394"/>
    </location>
</feature>
<feature type="strand" evidence="8">
    <location>
        <begin position="11"/>
        <end position="15"/>
    </location>
</feature>
<feature type="helix" evidence="8">
    <location>
        <begin position="20"/>
        <end position="22"/>
    </location>
</feature>
<feature type="turn" evidence="8">
    <location>
        <begin position="23"/>
        <end position="25"/>
    </location>
</feature>
<feature type="strand" evidence="8">
    <location>
        <begin position="28"/>
        <end position="33"/>
    </location>
</feature>
<feature type="strand" evidence="8">
    <location>
        <begin position="36"/>
        <end position="42"/>
    </location>
</feature>
<feature type="helix" evidence="8">
    <location>
        <begin position="51"/>
        <end position="55"/>
    </location>
</feature>
<feature type="helix" evidence="8">
    <location>
        <begin position="60"/>
        <end position="68"/>
    </location>
</feature>
<feature type="helix" evidence="8">
    <location>
        <begin position="75"/>
        <end position="90"/>
    </location>
</feature>
<feature type="helix" evidence="8">
    <location>
        <begin position="96"/>
        <end position="124"/>
    </location>
</feature>
<feature type="helix" evidence="8">
    <location>
        <begin position="129"/>
        <end position="149"/>
    </location>
</feature>
<feature type="strand" evidence="8">
    <location>
        <begin position="162"/>
        <end position="165"/>
    </location>
</feature>
<feature type="helix" evidence="8">
    <location>
        <begin position="171"/>
        <end position="193"/>
    </location>
</feature>
<feature type="helix" evidence="8">
    <location>
        <begin position="197"/>
        <end position="203"/>
    </location>
</feature>
<feature type="helix" evidence="8">
    <location>
        <begin position="211"/>
        <end position="216"/>
    </location>
</feature>
<feature type="helix" evidence="8">
    <location>
        <begin position="222"/>
        <end position="225"/>
    </location>
</feature>
<feature type="turn" evidence="8">
    <location>
        <begin position="226"/>
        <end position="228"/>
    </location>
</feature>
<feature type="helix" evidence="8">
    <location>
        <begin position="233"/>
        <end position="236"/>
    </location>
</feature>
<feature type="helix" evidence="8">
    <location>
        <begin position="242"/>
        <end position="244"/>
    </location>
</feature>
<feature type="helix" evidence="8">
    <location>
        <begin position="257"/>
        <end position="281"/>
    </location>
</feature>
<feature type="turn" evidence="8">
    <location>
        <begin position="292"/>
        <end position="294"/>
    </location>
</feature>
<feature type="helix" evidence="8">
    <location>
        <begin position="299"/>
        <end position="304"/>
    </location>
</feature>
<feature type="helix" evidence="8">
    <location>
        <begin position="306"/>
        <end position="317"/>
    </location>
</feature>
<feature type="strand" evidence="8">
    <location>
        <begin position="324"/>
        <end position="333"/>
    </location>
</feature>
<feature type="strand" evidence="8">
    <location>
        <begin position="336"/>
        <end position="344"/>
    </location>
</feature>
<feature type="strand" evidence="8">
    <location>
        <begin position="346"/>
        <end position="349"/>
    </location>
</feature>
<feature type="strand" evidence="8">
    <location>
        <begin position="351"/>
        <end position="356"/>
    </location>
</feature>
<feature type="helix" evidence="8">
    <location>
        <begin position="358"/>
        <end position="364"/>
    </location>
</feature>
<feature type="helix" evidence="8">
    <location>
        <begin position="366"/>
        <end position="370"/>
    </location>
</feature>
<feature type="strand" evidence="7">
    <location>
        <begin position="373"/>
        <end position="375"/>
    </location>
</feature>
<feature type="helix" evidence="8">
    <location>
        <begin position="377"/>
        <end position="385"/>
    </location>
</feature>
<feature type="helix" evidence="8">
    <location>
        <begin position="389"/>
        <end position="393"/>
    </location>
</feature>
<geneLocation type="mitochondrion"/>
<gene>
    <name type="primary">NAD7</name>
    <name type="ordered locus">AtMg00510</name>
</gene>
<evidence type="ECO:0000250" key="1"/>
<evidence type="ECO:0000269" key="2">
    <source>
    </source>
</evidence>
<evidence type="ECO:0000269" key="3">
    <source>
    </source>
</evidence>
<evidence type="ECO:0000269" key="4">
    <source>
    </source>
</evidence>
<evidence type="ECO:0000305" key="5"/>
<evidence type="ECO:0007744" key="6">
    <source>
        <dbReference type="PDB" id="8BEE"/>
    </source>
</evidence>
<evidence type="ECO:0007829" key="7">
    <source>
        <dbReference type="PDB" id="7AQR"/>
    </source>
</evidence>
<evidence type="ECO:0007829" key="8">
    <source>
        <dbReference type="PDB" id="8BEE"/>
    </source>
</evidence>
<reference key="1">
    <citation type="journal article" date="1997" name="Nat. Genet.">
        <title>The mitochondrial genome of Arabidopsis thaliana contains 57 genes in 366,924 nucleotides.</title>
        <authorList>
            <person name="Unseld M."/>
            <person name="Marienfeld J.R."/>
            <person name="Brandt P."/>
            <person name="Brennicke A."/>
        </authorList>
    </citation>
    <scope>NUCLEOTIDE SEQUENCE [LARGE SCALE GENOMIC DNA]</scope>
    <source>
        <strain>cv. C24</strain>
    </source>
</reference>
<reference key="2">
    <citation type="journal article" date="1999" name="Proc. Natl. Acad. Sci. U.S.A.">
        <title>RNA editing in Arabidopsis mitochondria effects 441 C to U changes in ORFs.</title>
        <authorList>
            <person name="Giege P."/>
            <person name="Brennicke A."/>
        </authorList>
    </citation>
    <scope>NUCLEOTIDE SEQUENCE [GENOMIC DNA]</scope>
    <scope>RNA EDITING</scope>
</reference>
<reference key="3">
    <citation type="journal article" date="2018" name="Plant Cell">
        <title>Correction of persistent errors in Arabidopsis reference mitochondrial genomes.</title>
        <authorList>
            <person name="Sloan D.B."/>
            <person name="Wu Z."/>
            <person name="Sharbrough J."/>
        </authorList>
    </citation>
    <scope>NUCLEOTIDE SEQUENCE [LARGE SCALE GENOMIC DNA]</scope>
    <scope>RNA EDITING</scope>
    <source>
        <strain>cv. Columbia</strain>
    </source>
</reference>
<reference key="4">
    <citation type="journal article" date="1999" name="Nature">
        <title>Sequence and analysis of chromosome 2 of the plant Arabidopsis thaliana.</title>
        <authorList>
            <person name="Lin X."/>
            <person name="Kaul S."/>
            <person name="Rounsley S.D."/>
            <person name="Shea T.P."/>
            <person name="Benito M.-I."/>
            <person name="Town C.D."/>
            <person name="Fujii C.Y."/>
            <person name="Mason T.M."/>
            <person name="Bowman C.L."/>
            <person name="Barnstead M.E."/>
            <person name="Feldblyum T.V."/>
            <person name="Buell C.R."/>
            <person name="Ketchum K.A."/>
            <person name="Lee J.J."/>
            <person name="Ronning C.M."/>
            <person name="Koo H.L."/>
            <person name="Moffat K.S."/>
            <person name="Cronin L.A."/>
            <person name="Shen M."/>
            <person name="Pai G."/>
            <person name="Van Aken S."/>
            <person name="Umayam L."/>
            <person name="Tallon L.J."/>
            <person name="Gill J.E."/>
            <person name="Adams M.D."/>
            <person name="Carrera A.J."/>
            <person name="Creasy T.H."/>
            <person name="Goodman H.M."/>
            <person name="Somerville C.R."/>
            <person name="Copenhaver G.P."/>
            <person name="Preuss D."/>
            <person name="Nierman W.C."/>
            <person name="White O."/>
            <person name="Eisen J.A."/>
            <person name="Salzberg S.L."/>
            <person name="Fraser C.M."/>
            <person name="Venter J.C."/>
        </authorList>
    </citation>
    <scope>NUCLEOTIDE SEQUENCE [LARGE SCALE GENOMIC DNA] (AT2G07709)</scope>
    <source>
        <strain>cv. Columbia</strain>
    </source>
</reference>
<reference key="5">
    <citation type="journal article" date="2004" name="Plant Cell">
        <title>Experimental analysis of the Arabidopsis mitochondrial proteome highlights signaling and regulatory components, provides assessment of targeting prediction programs, and indicates plant-specific mitochondrial proteins.</title>
        <authorList>
            <person name="Heazlewood J.L."/>
            <person name="Tonti-Filippini J.S."/>
            <person name="Gout A.M."/>
            <person name="Day D.A."/>
            <person name="Whelan J."/>
            <person name="Millar A.H."/>
        </authorList>
    </citation>
    <scope>IDENTIFICATION BY MASS SPECTROMETRY</scope>
    <scope>SUBCELLULAR LOCATION [LARGE SCALE ANALYSIS]</scope>
    <source>
        <strain>cv. Landsberg erecta</strain>
    </source>
</reference>
<reference evidence="6" key="6">
    <citation type="journal article" date="2023" name="Nat. Plants">
        <title>Cryo-EM structure of the respiratory I + III(2) supercomplex from Arabidopsis thaliana at 2 A resolution.</title>
        <authorList>
            <person name="Klusch N."/>
            <person name="Dreimann M."/>
            <person name="Senkler J."/>
            <person name="Rugen N."/>
            <person name="Kuehlbrandt W."/>
            <person name="Braun H.P."/>
        </authorList>
    </citation>
    <scope>STRUCTURE BY ELECTRON MICROSCOPY (2.04 ANGSTROMS)</scope>
</reference>
<sequence>MTTRKRQIKNFTLNFGPQHPAAHGVLRLVLEMNGEVVERAEPHIGLLHRGTEKLIEYKTYLQALPYFDRLDYVSMMAQEHAYSLAVEKLLNCEVPLRAQYIRVLFCEITRILNHLLALTTHAMDVGALTPFLWAFEEREKLLEFYERVSGARMHASFIRPGGVAQDLPLGLCRDIDSFTQQFASRIDELEEMLTGNRIWKQRLVDIGTVTAQQAKDWGFSGVMLRGSGVCWDLRRAAPYDVYDQLDFDVPVGTRGDCYDRYCIRIEEMRQSLRIIVQCLNQMPSGMIKADDRKLCPPSRCRMKLSMESLIHHFELYTEGFSVPASSTYTAVEAPKGEFGVFLVSNGSNRPYRCKIRAPGFAHLQGLDFMSKHHMLADVVTIIGTQDIVFGEVDR</sequence>